<feature type="chain" id="PRO_0000461635" description="Beta-mammal toxin Cv3" evidence="3">
    <location>
        <begin position="1"/>
        <end position="66"/>
    </location>
</feature>
<feature type="domain" description="LCN-type CS-alpha/beta" evidence="2">
    <location>
        <begin position="1"/>
        <end position="66"/>
    </location>
</feature>
<feature type="disulfide bond" evidence="2">
    <location>
        <begin position="12"/>
        <end position="65"/>
    </location>
</feature>
<feature type="disulfide bond" evidence="2">
    <location>
        <begin position="16"/>
        <end position="41"/>
    </location>
</feature>
<feature type="disulfide bond" evidence="2">
    <location>
        <begin position="25"/>
        <end position="46"/>
    </location>
</feature>
<feature type="disulfide bond" evidence="2">
    <location>
        <begin position="29"/>
        <end position="48"/>
    </location>
</feature>
<sequence length="66" mass="7758">KEGYIVNYYDGCKYACVKLGDNDYCLRECRLRYYKSAGGYCYAFACWCTHLYEQAVVWPLPNKTCN</sequence>
<accession>C0HMC0</accession>
<reference key="1">
    <citation type="journal article" date="2024" name="Toxins">
        <title>Toxic peptides from the Mexican scorpion Centruroides villegasi: chemical structure and evaluation of recognition by human single-chain antibodies.</title>
        <authorList>
            <person name="Riano-Umbarila L."/>
            <person name="Olamendi-Portugal T."/>
            <person name="Romero-Moreno J.A."/>
            <person name="Delgado-Prudencio G."/>
            <person name="Zamudio F.Z."/>
            <person name="Becerril B."/>
            <person name="Possani L.D."/>
        </authorList>
    </citation>
    <scope>PROTEIN SEQUENCE</scope>
    <scope>SUBCELLULAR LOCATION</scope>
    <scope>FUNCTION</scope>
    <scope>BIOASSAY</scope>
    <scope>MASS SPECTROMETRY</scope>
    <source>
        <tissue>Venom</tissue>
    </source>
</reference>
<comment type="function">
    <text evidence="1 3">Beta toxins bind voltage-independently at site-4 of sodium channels (Nav) and reduces peak current and shifts the voltage of activation toward more negative potentials thereby affecting sodium channel activation and promoting spontaneous and repetitive firing (By similarity). This toxin is strongly toxic to mice (PubMed:39057941).</text>
</comment>
<comment type="subcellular location">
    <subcellularLocation>
        <location evidence="3">Secreted</location>
    </subcellularLocation>
</comment>
<comment type="tissue specificity">
    <text evidence="6">Expressed by the venom gland.</text>
</comment>
<comment type="domain">
    <text evidence="5">Has the structural arrangement of an alpha-helix connected to antiparallel beta-sheets by disulfide bonds (CS-alpha/beta).</text>
</comment>
<comment type="mass spectrometry" mass="7750.1" method="Electrospray" evidence="3"/>
<comment type="similarity">
    <text evidence="5">Belongs to the long (4 C-C) scorpion toxin superfamily. Sodium channel inhibitor family. Beta subfamily.</text>
</comment>
<organism>
    <name type="scientific">Centruroides villegasi</name>
    <name type="common">Scorpion</name>
    <dbReference type="NCBI Taxonomy" id="3161195"/>
    <lineage>
        <taxon>Eukaryota</taxon>
        <taxon>Metazoa</taxon>
        <taxon>Ecdysozoa</taxon>
        <taxon>Arthropoda</taxon>
        <taxon>Chelicerata</taxon>
        <taxon>Arachnida</taxon>
        <taxon>Scorpiones</taxon>
        <taxon>Buthida</taxon>
        <taxon>Buthoidea</taxon>
        <taxon>Buthidae</taxon>
        <taxon>Centruroides</taxon>
    </lineage>
</organism>
<name>SCX3_CENVL</name>
<proteinExistence type="evidence at protein level"/>
<evidence type="ECO:0000250" key="1">
    <source>
        <dbReference type="UniProtKB" id="C0HLR3"/>
    </source>
</evidence>
<evidence type="ECO:0000255" key="2">
    <source>
        <dbReference type="PROSITE-ProRule" id="PRU01210"/>
    </source>
</evidence>
<evidence type="ECO:0000269" key="3">
    <source>
    </source>
</evidence>
<evidence type="ECO:0000303" key="4">
    <source>
    </source>
</evidence>
<evidence type="ECO:0000305" key="5"/>
<evidence type="ECO:0000305" key="6">
    <source>
    </source>
</evidence>
<dbReference type="GO" id="GO:0005576">
    <property type="term" value="C:extracellular region"/>
    <property type="evidence" value="ECO:0007669"/>
    <property type="project" value="UniProtKB-SubCell"/>
</dbReference>
<dbReference type="GO" id="GO:0019871">
    <property type="term" value="F:sodium channel inhibitor activity"/>
    <property type="evidence" value="ECO:0007669"/>
    <property type="project" value="InterPro"/>
</dbReference>
<dbReference type="GO" id="GO:0090729">
    <property type="term" value="F:toxin activity"/>
    <property type="evidence" value="ECO:0007669"/>
    <property type="project" value="UniProtKB-KW"/>
</dbReference>
<dbReference type="GO" id="GO:0006952">
    <property type="term" value="P:defense response"/>
    <property type="evidence" value="ECO:0007669"/>
    <property type="project" value="InterPro"/>
</dbReference>
<dbReference type="CDD" id="cd23106">
    <property type="entry name" value="neurotoxins_LC_scorpion"/>
    <property type="match status" value="1"/>
</dbReference>
<dbReference type="FunFam" id="3.30.30.10:FF:000002">
    <property type="entry name" value="Alpha-like toxin BmK-M1"/>
    <property type="match status" value="1"/>
</dbReference>
<dbReference type="Gene3D" id="3.30.30.10">
    <property type="entry name" value="Knottin, scorpion toxin-like"/>
    <property type="match status" value="1"/>
</dbReference>
<dbReference type="InterPro" id="IPR044062">
    <property type="entry name" value="LCN-type_CS_alpha_beta_dom"/>
</dbReference>
<dbReference type="InterPro" id="IPR003614">
    <property type="entry name" value="Scorpion_toxin-like"/>
</dbReference>
<dbReference type="InterPro" id="IPR036574">
    <property type="entry name" value="Scorpion_toxin-like_sf"/>
</dbReference>
<dbReference type="InterPro" id="IPR018218">
    <property type="entry name" value="Scorpion_toxinL"/>
</dbReference>
<dbReference type="PRINTS" id="PR00285">
    <property type="entry name" value="SCORPNTOXIN"/>
</dbReference>
<dbReference type="SMART" id="SM00505">
    <property type="entry name" value="Knot1"/>
    <property type="match status" value="1"/>
</dbReference>
<dbReference type="SUPFAM" id="SSF57095">
    <property type="entry name" value="Scorpion toxin-like"/>
    <property type="match status" value="1"/>
</dbReference>
<dbReference type="PROSITE" id="PS51863">
    <property type="entry name" value="LCN_CSAB"/>
    <property type="match status" value="1"/>
</dbReference>
<protein>
    <recommendedName>
        <fullName evidence="4 5">Beta-mammal toxin Cv3</fullName>
    </recommendedName>
</protein>
<keyword id="KW-0903">Direct protein sequencing</keyword>
<keyword id="KW-1015">Disulfide bond</keyword>
<keyword id="KW-0872">Ion channel impairing toxin</keyword>
<keyword id="KW-0528">Neurotoxin</keyword>
<keyword id="KW-0964">Secreted</keyword>
<keyword id="KW-0800">Toxin</keyword>
<keyword id="KW-0738">Voltage-gated sodium channel impairing toxin</keyword>